<keyword id="KW-0903">Direct protein sequencing</keyword>
<keyword id="KW-0249">Electron transport</keyword>
<keyword id="KW-0349">Heme</keyword>
<keyword id="KW-0408">Iron</keyword>
<keyword id="KW-0479">Metal-binding</keyword>
<keyword id="KW-0485">Methanol utilization</keyword>
<keyword id="KW-0574">Periplasm</keyword>
<keyword id="KW-0732">Signal</keyword>
<keyword id="KW-0813">Transport</keyword>
<protein>
    <recommendedName>
        <fullName>Cytochrome c-553I</fullName>
    </recommendedName>
    <alternativeName>
        <fullName>Cytochrome c553I</fullName>
    </alternativeName>
</protein>
<comment type="subcellular location">
    <subcellularLocation>
        <location>Periplasm</location>
    </subcellularLocation>
</comment>
<comment type="induction">
    <text>During growth on methanol.</text>
</comment>
<comment type="PTM">
    <text>Binds 1 heme group per subunit.</text>
</comment>
<sequence>MTSKTTASLLAICVACAASAIAGTALCADRRNAPAQAGAGAAAAVSGDAHEQPAAEAPAEEEEETPAVAATDGKLVLPNGQDITPDHMENGRWYTAEDIPTYKIAEEGAVDWATFSGYRRYSAECHVCHGPDGEGSTYAPALRKSVLTMGYYDFLEIAASGKQEVNTAANLVMPAFGTNKNVWCYIDDIYAYLLARGTGDLPRGRPAKREDKSDEFVAQEDSCMSG</sequence>
<dbReference type="EMBL" id="M75583">
    <property type="protein sequence ID" value="AAA25575.1"/>
    <property type="molecule type" value="Genomic_DNA"/>
</dbReference>
<dbReference type="PIR" id="B41378">
    <property type="entry name" value="B41378"/>
</dbReference>
<dbReference type="SMR" id="P29967"/>
<dbReference type="GO" id="GO:0042597">
    <property type="term" value="C:periplasmic space"/>
    <property type="evidence" value="ECO:0007669"/>
    <property type="project" value="UniProtKB-SubCell"/>
</dbReference>
<dbReference type="GO" id="GO:0009055">
    <property type="term" value="F:electron transfer activity"/>
    <property type="evidence" value="ECO:0007669"/>
    <property type="project" value="InterPro"/>
</dbReference>
<dbReference type="GO" id="GO:0020037">
    <property type="term" value="F:heme binding"/>
    <property type="evidence" value="ECO:0007669"/>
    <property type="project" value="InterPro"/>
</dbReference>
<dbReference type="GO" id="GO:0046872">
    <property type="term" value="F:metal ion binding"/>
    <property type="evidence" value="ECO:0007669"/>
    <property type="project" value="UniProtKB-KW"/>
</dbReference>
<dbReference type="GO" id="GO:0015945">
    <property type="term" value="P:methanol metabolic process"/>
    <property type="evidence" value="ECO:0007669"/>
    <property type="project" value="UniProtKB-KW"/>
</dbReference>
<dbReference type="Gene3D" id="1.10.760.10">
    <property type="entry name" value="Cytochrome c-like domain"/>
    <property type="match status" value="1"/>
</dbReference>
<dbReference type="InterPro" id="IPR022411">
    <property type="entry name" value="C-typ_cyt_methanol_metab-rel"/>
</dbReference>
<dbReference type="InterPro" id="IPR036909">
    <property type="entry name" value="Cyt_c-like_dom_sf"/>
</dbReference>
<dbReference type="NCBIfam" id="TIGR03874">
    <property type="entry name" value="4cys_cytochr"/>
    <property type="match status" value="1"/>
</dbReference>
<dbReference type="SUPFAM" id="SSF46626">
    <property type="entry name" value="Cytochrome c"/>
    <property type="match status" value="1"/>
</dbReference>
<name>C553_PARDE</name>
<proteinExistence type="evidence at protein level"/>
<reference key="1">
    <citation type="journal article" date="1991" name="J. Bacteriol.">
        <title>Isolation, sequencing, and mutagenesis of the gene encoding cytochrome c553i of Paracoccus denitrificans and characterization of the mutant strain.</title>
        <authorList>
            <person name="Ras J."/>
            <person name="Reijnders W.N.M."/>
            <person name="van Spanning R.J.M."/>
            <person name="Harms N."/>
            <person name="Oltmann L.F."/>
            <person name="Stouthamer A.H."/>
        </authorList>
    </citation>
    <scope>NUCLEOTIDE SEQUENCE [GENOMIC DNA]</scope>
    <scope>PARTIAL PROTEIN SEQUENCE</scope>
    <source>
        <strain>Pd 1235</strain>
    </source>
</reference>
<gene>
    <name type="primary">cycB</name>
</gene>
<evidence type="ECO:0000250" key="1"/>
<evidence type="ECO:0000255" key="2"/>
<evidence type="ECO:0000256" key="3">
    <source>
        <dbReference type="SAM" id="MobiDB-lite"/>
    </source>
</evidence>
<accession>P29967</accession>
<feature type="signal peptide" evidence="2">
    <location>
        <begin position="1"/>
        <end position="22"/>
    </location>
</feature>
<feature type="chain" id="PRO_0000006539" description="Cytochrome c-553I">
    <location>
        <begin position="23"/>
        <end position="226"/>
    </location>
</feature>
<feature type="region of interest" description="Disordered" evidence="3">
    <location>
        <begin position="43"/>
        <end position="68"/>
    </location>
</feature>
<feature type="region of interest" description="Disordered" evidence="3">
    <location>
        <begin position="203"/>
        <end position="226"/>
    </location>
</feature>
<feature type="binding site" description="covalent" evidence="1">
    <location>
        <position position="125"/>
    </location>
    <ligand>
        <name>heme</name>
        <dbReference type="ChEBI" id="CHEBI:30413"/>
    </ligand>
</feature>
<feature type="binding site" description="covalent" evidence="1">
    <location>
        <position position="128"/>
    </location>
    <ligand>
        <name>heme</name>
        <dbReference type="ChEBI" id="CHEBI:30413"/>
    </ligand>
</feature>
<feature type="binding site" description="axial binding residue" evidence="1">
    <location>
        <position position="129"/>
    </location>
    <ligand>
        <name>heme</name>
        <dbReference type="ChEBI" id="CHEBI:30413"/>
    </ligand>
    <ligandPart>
        <name>Fe</name>
        <dbReference type="ChEBI" id="CHEBI:18248"/>
    </ligandPart>
</feature>
<feature type="binding site" description="axial binding residue" evidence="1">
    <location>
        <position position="173"/>
    </location>
    <ligand>
        <name>heme</name>
        <dbReference type="ChEBI" id="CHEBI:30413"/>
    </ligand>
    <ligandPart>
        <name>Fe</name>
        <dbReference type="ChEBI" id="CHEBI:18248"/>
    </ligandPart>
</feature>
<organism>
    <name type="scientific">Paracoccus denitrificans</name>
    <dbReference type="NCBI Taxonomy" id="266"/>
    <lineage>
        <taxon>Bacteria</taxon>
        <taxon>Pseudomonadati</taxon>
        <taxon>Pseudomonadota</taxon>
        <taxon>Alphaproteobacteria</taxon>
        <taxon>Rhodobacterales</taxon>
        <taxon>Paracoccaceae</taxon>
        <taxon>Paracoccus</taxon>
    </lineage>
</organism>